<organism>
    <name type="scientific">Alkaliphilus metalliredigens (strain QYMF)</name>
    <dbReference type="NCBI Taxonomy" id="293826"/>
    <lineage>
        <taxon>Bacteria</taxon>
        <taxon>Bacillati</taxon>
        <taxon>Bacillota</taxon>
        <taxon>Clostridia</taxon>
        <taxon>Peptostreptococcales</taxon>
        <taxon>Natronincolaceae</taxon>
        <taxon>Alkaliphilus</taxon>
    </lineage>
</organism>
<keyword id="KW-0028">Amino-acid biosynthesis</keyword>
<keyword id="KW-0963">Cytoplasm</keyword>
<keyword id="KW-0220">Diaminopimelate biosynthesis</keyword>
<keyword id="KW-0457">Lysine biosynthesis</keyword>
<keyword id="KW-0520">NAD</keyword>
<keyword id="KW-0521">NADP</keyword>
<keyword id="KW-0560">Oxidoreductase</keyword>
<keyword id="KW-1185">Reference proteome</keyword>
<comment type="function">
    <text evidence="1">Catalyzes the conversion of 4-hydroxy-tetrahydrodipicolinate (HTPA) to tetrahydrodipicolinate.</text>
</comment>
<comment type="catalytic activity">
    <reaction evidence="1">
        <text>(S)-2,3,4,5-tetrahydrodipicolinate + NAD(+) + H2O = (2S,4S)-4-hydroxy-2,3,4,5-tetrahydrodipicolinate + NADH + H(+)</text>
        <dbReference type="Rhea" id="RHEA:35323"/>
        <dbReference type="ChEBI" id="CHEBI:15377"/>
        <dbReference type="ChEBI" id="CHEBI:15378"/>
        <dbReference type="ChEBI" id="CHEBI:16845"/>
        <dbReference type="ChEBI" id="CHEBI:57540"/>
        <dbReference type="ChEBI" id="CHEBI:57945"/>
        <dbReference type="ChEBI" id="CHEBI:67139"/>
        <dbReference type="EC" id="1.17.1.8"/>
    </reaction>
</comment>
<comment type="catalytic activity">
    <reaction evidence="1">
        <text>(S)-2,3,4,5-tetrahydrodipicolinate + NADP(+) + H2O = (2S,4S)-4-hydroxy-2,3,4,5-tetrahydrodipicolinate + NADPH + H(+)</text>
        <dbReference type="Rhea" id="RHEA:35331"/>
        <dbReference type="ChEBI" id="CHEBI:15377"/>
        <dbReference type="ChEBI" id="CHEBI:15378"/>
        <dbReference type="ChEBI" id="CHEBI:16845"/>
        <dbReference type="ChEBI" id="CHEBI:57783"/>
        <dbReference type="ChEBI" id="CHEBI:58349"/>
        <dbReference type="ChEBI" id="CHEBI:67139"/>
        <dbReference type="EC" id="1.17.1.8"/>
    </reaction>
</comment>
<comment type="pathway">
    <text evidence="1">Amino-acid biosynthesis; L-lysine biosynthesis via DAP pathway; (S)-tetrahydrodipicolinate from L-aspartate: step 4/4.</text>
</comment>
<comment type="subcellular location">
    <subcellularLocation>
        <location evidence="1">Cytoplasm</location>
    </subcellularLocation>
</comment>
<comment type="similarity">
    <text evidence="1">Belongs to the DapB family.</text>
</comment>
<comment type="caution">
    <text evidence="2">Was originally thought to be a dihydrodipicolinate reductase (DHDPR), catalyzing the conversion of dihydrodipicolinate to tetrahydrodipicolinate. However, it was shown in E.coli that the substrate of the enzymatic reaction is not dihydrodipicolinate (DHDP) but in fact (2S,4S)-4-hydroxy-2,3,4,5-tetrahydrodipicolinic acid (HTPA), the product released by the DapA-catalyzed reaction.</text>
</comment>
<feature type="chain" id="PRO_1000057675" description="4-hydroxy-tetrahydrodipicolinate reductase">
    <location>
        <begin position="1"/>
        <end position="240"/>
    </location>
</feature>
<feature type="active site" description="Proton donor/acceptor" evidence="1">
    <location>
        <position position="131"/>
    </location>
</feature>
<feature type="active site" description="Proton donor" evidence="1">
    <location>
        <position position="135"/>
    </location>
</feature>
<feature type="binding site" evidence="1">
    <location>
        <begin position="7"/>
        <end position="12"/>
    </location>
    <ligand>
        <name>NAD(+)</name>
        <dbReference type="ChEBI" id="CHEBI:57540"/>
    </ligand>
</feature>
<feature type="binding site" evidence="1">
    <location>
        <position position="35"/>
    </location>
    <ligand>
        <name>NADP(+)</name>
        <dbReference type="ChEBI" id="CHEBI:58349"/>
    </ligand>
</feature>
<feature type="binding site" evidence="1">
    <location>
        <begin position="74"/>
        <end position="76"/>
    </location>
    <ligand>
        <name>NAD(+)</name>
        <dbReference type="ChEBI" id="CHEBI:57540"/>
    </ligand>
</feature>
<feature type="binding site" evidence="1">
    <location>
        <begin position="98"/>
        <end position="101"/>
    </location>
    <ligand>
        <name>NAD(+)</name>
        <dbReference type="ChEBI" id="CHEBI:57540"/>
    </ligand>
</feature>
<feature type="binding site" evidence="1">
    <location>
        <position position="132"/>
    </location>
    <ligand>
        <name>(S)-2,3,4,5-tetrahydrodipicolinate</name>
        <dbReference type="ChEBI" id="CHEBI:16845"/>
    </ligand>
</feature>
<feature type="binding site" evidence="1">
    <location>
        <begin position="141"/>
        <end position="142"/>
    </location>
    <ligand>
        <name>(S)-2,3,4,5-tetrahydrodipicolinate</name>
        <dbReference type="ChEBI" id="CHEBI:16845"/>
    </ligand>
</feature>
<sequence length="240" mass="25927">MKLLIWGLSGTMGNLISVAAQKDSHWSNIAGVDAKNPTSNLKHTPEVIIDFSHPSALEGVLDYAMAHGVPLVIGTTGFEKEHLEAIDQAAKHIPVLQATNMSLGMNILFSLVEQVAGMLKNKADIEVIESHHNRKMDAPSGSAVTIVECIEKGLGEARKHQHGREGQCPREKGEIGVHAIRGGNIVGFHEANFINELETVKVSHEAHDRSVFAQGALEAAKFVVNQPTGLYHMKDVLGLT</sequence>
<accession>A6TT16</accession>
<dbReference type="EC" id="1.17.1.8" evidence="1"/>
<dbReference type="EMBL" id="CP000724">
    <property type="protein sequence ID" value="ABR49334.1"/>
    <property type="molecule type" value="Genomic_DNA"/>
</dbReference>
<dbReference type="RefSeq" id="WP_012064299.1">
    <property type="nucleotide sequence ID" value="NC_009633.1"/>
</dbReference>
<dbReference type="SMR" id="A6TT16"/>
<dbReference type="STRING" id="293826.Amet_3196"/>
<dbReference type="KEGG" id="amt:Amet_3196"/>
<dbReference type="eggNOG" id="COG0289">
    <property type="taxonomic scope" value="Bacteria"/>
</dbReference>
<dbReference type="HOGENOM" id="CLU_047479_2_2_9"/>
<dbReference type="OrthoDB" id="9790352at2"/>
<dbReference type="UniPathway" id="UPA00034">
    <property type="reaction ID" value="UER00018"/>
</dbReference>
<dbReference type="Proteomes" id="UP000001572">
    <property type="component" value="Chromosome"/>
</dbReference>
<dbReference type="GO" id="GO:0005829">
    <property type="term" value="C:cytosol"/>
    <property type="evidence" value="ECO:0007669"/>
    <property type="project" value="TreeGrafter"/>
</dbReference>
<dbReference type="GO" id="GO:0008839">
    <property type="term" value="F:4-hydroxy-tetrahydrodipicolinate reductase"/>
    <property type="evidence" value="ECO:0007669"/>
    <property type="project" value="UniProtKB-EC"/>
</dbReference>
<dbReference type="GO" id="GO:0051287">
    <property type="term" value="F:NAD binding"/>
    <property type="evidence" value="ECO:0007669"/>
    <property type="project" value="UniProtKB-UniRule"/>
</dbReference>
<dbReference type="GO" id="GO:0050661">
    <property type="term" value="F:NADP binding"/>
    <property type="evidence" value="ECO:0007669"/>
    <property type="project" value="UniProtKB-UniRule"/>
</dbReference>
<dbReference type="GO" id="GO:0016726">
    <property type="term" value="F:oxidoreductase activity, acting on CH or CH2 groups, NAD or NADP as acceptor"/>
    <property type="evidence" value="ECO:0007669"/>
    <property type="project" value="UniProtKB-UniRule"/>
</dbReference>
<dbReference type="GO" id="GO:0019877">
    <property type="term" value="P:diaminopimelate biosynthetic process"/>
    <property type="evidence" value="ECO:0007669"/>
    <property type="project" value="UniProtKB-UniRule"/>
</dbReference>
<dbReference type="GO" id="GO:0009089">
    <property type="term" value="P:lysine biosynthetic process via diaminopimelate"/>
    <property type="evidence" value="ECO:0007669"/>
    <property type="project" value="UniProtKB-UniRule"/>
</dbReference>
<dbReference type="CDD" id="cd02274">
    <property type="entry name" value="DHDPR_N"/>
    <property type="match status" value="1"/>
</dbReference>
<dbReference type="Gene3D" id="3.30.360.10">
    <property type="entry name" value="Dihydrodipicolinate Reductase, domain 2"/>
    <property type="match status" value="1"/>
</dbReference>
<dbReference type="Gene3D" id="3.40.50.720">
    <property type="entry name" value="NAD(P)-binding Rossmann-like Domain"/>
    <property type="match status" value="1"/>
</dbReference>
<dbReference type="HAMAP" id="MF_00102">
    <property type="entry name" value="DapB"/>
    <property type="match status" value="1"/>
</dbReference>
<dbReference type="InterPro" id="IPR022663">
    <property type="entry name" value="DapB_C"/>
</dbReference>
<dbReference type="InterPro" id="IPR000846">
    <property type="entry name" value="DapB_N"/>
</dbReference>
<dbReference type="InterPro" id="IPR022664">
    <property type="entry name" value="DapB_N_CS"/>
</dbReference>
<dbReference type="InterPro" id="IPR023940">
    <property type="entry name" value="DHDPR_bac"/>
</dbReference>
<dbReference type="InterPro" id="IPR036291">
    <property type="entry name" value="NAD(P)-bd_dom_sf"/>
</dbReference>
<dbReference type="NCBIfam" id="TIGR00036">
    <property type="entry name" value="dapB"/>
    <property type="match status" value="1"/>
</dbReference>
<dbReference type="PANTHER" id="PTHR20836:SF7">
    <property type="entry name" value="4-HYDROXY-TETRAHYDRODIPICOLINATE REDUCTASE"/>
    <property type="match status" value="1"/>
</dbReference>
<dbReference type="PANTHER" id="PTHR20836">
    <property type="entry name" value="DIHYDRODIPICOLINATE REDUCTASE"/>
    <property type="match status" value="1"/>
</dbReference>
<dbReference type="Pfam" id="PF05173">
    <property type="entry name" value="DapB_C"/>
    <property type="match status" value="1"/>
</dbReference>
<dbReference type="Pfam" id="PF01113">
    <property type="entry name" value="DapB_N"/>
    <property type="match status" value="1"/>
</dbReference>
<dbReference type="PIRSF" id="PIRSF000161">
    <property type="entry name" value="DHPR"/>
    <property type="match status" value="1"/>
</dbReference>
<dbReference type="SUPFAM" id="SSF55347">
    <property type="entry name" value="Glyceraldehyde-3-phosphate dehydrogenase-like, C-terminal domain"/>
    <property type="match status" value="1"/>
</dbReference>
<dbReference type="SUPFAM" id="SSF51735">
    <property type="entry name" value="NAD(P)-binding Rossmann-fold domains"/>
    <property type="match status" value="1"/>
</dbReference>
<dbReference type="PROSITE" id="PS01298">
    <property type="entry name" value="DAPB"/>
    <property type="match status" value="1"/>
</dbReference>
<gene>
    <name evidence="1" type="primary">dapB</name>
    <name type="ordered locus">Amet_3196</name>
</gene>
<protein>
    <recommendedName>
        <fullName evidence="1">4-hydroxy-tetrahydrodipicolinate reductase</fullName>
        <shortName evidence="1">HTPA reductase</shortName>
        <ecNumber evidence="1">1.17.1.8</ecNumber>
    </recommendedName>
</protein>
<name>DAPB_ALKMQ</name>
<evidence type="ECO:0000255" key="1">
    <source>
        <dbReference type="HAMAP-Rule" id="MF_00102"/>
    </source>
</evidence>
<evidence type="ECO:0000305" key="2"/>
<reference key="1">
    <citation type="journal article" date="2016" name="Genome Announc.">
        <title>Complete genome sequence of Alkaliphilus metalliredigens strain QYMF, an alkaliphilic and metal-reducing bacterium isolated from borax-contaminated leachate ponds.</title>
        <authorList>
            <person name="Hwang C."/>
            <person name="Copeland A."/>
            <person name="Lucas S."/>
            <person name="Lapidus A."/>
            <person name="Barry K."/>
            <person name="Detter J.C."/>
            <person name="Glavina Del Rio T."/>
            <person name="Hammon N."/>
            <person name="Israni S."/>
            <person name="Dalin E."/>
            <person name="Tice H."/>
            <person name="Pitluck S."/>
            <person name="Chertkov O."/>
            <person name="Brettin T."/>
            <person name="Bruce D."/>
            <person name="Han C."/>
            <person name="Schmutz J."/>
            <person name="Larimer F."/>
            <person name="Land M.L."/>
            <person name="Hauser L."/>
            <person name="Kyrpides N."/>
            <person name="Mikhailova N."/>
            <person name="Ye Q."/>
            <person name="Zhou J."/>
            <person name="Richardson P."/>
            <person name="Fields M.W."/>
        </authorList>
    </citation>
    <scope>NUCLEOTIDE SEQUENCE [LARGE SCALE GENOMIC DNA]</scope>
    <source>
        <strain>QYMF</strain>
    </source>
</reference>
<proteinExistence type="inferred from homology"/>